<sequence length="54" mass="5846">FATVDCSEYPKPVCSPEYMPLCGSDSKTYNNKCDFCSAVVESNGTLTLGHFGKC</sequence>
<evidence type="ECO:0000255" key="1">
    <source>
        <dbReference type="PROSITE-ProRule" id="PRU00798"/>
    </source>
</evidence>
<proteinExistence type="evidence at protein level"/>
<feature type="chain" id="PRO_0000073073" description="Ovomucoid">
    <location>
        <begin position="1" status="less than"/>
        <end position="54" status="greater than"/>
    </location>
</feature>
<feature type="domain" description="Kazal-like" evidence="1">
    <location>
        <begin position="4"/>
        <end position="54"/>
    </location>
</feature>
<feature type="site" description="Reactive bond 3">
    <location>
        <begin position="16"/>
        <end position="17"/>
    </location>
</feature>
<feature type="glycosylation site" description="N-linked (GlcNAc...) asparagine">
    <location>
        <position position="43"/>
    </location>
</feature>
<feature type="disulfide bond">
    <location>
        <begin position="6"/>
        <end position="36"/>
    </location>
</feature>
<feature type="disulfide bond">
    <location>
        <begin position="14"/>
        <end position="33"/>
    </location>
</feature>
<feature type="disulfide bond">
    <location>
        <begin position="22"/>
        <end position="54"/>
    </location>
</feature>
<feature type="non-terminal residue">
    <location>
        <position position="1"/>
    </location>
</feature>
<feature type="non-terminal residue">
    <location>
        <position position="54"/>
    </location>
</feature>
<organism>
    <name type="scientific">Casuarius bennetti</name>
    <name type="common">Dwarf cassowary</name>
    <dbReference type="NCBI Taxonomy" id="30463"/>
    <lineage>
        <taxon>Eukaryota</taxon>
        <taxon>Metazoa</taxon>
        <taxon>Chordata</taxon>
        <taxon>Craniata</taxon>
        <taxon>Vertebrata</taxon>
        <taxon>Euteleostomi</taxon>
        <taxon>Archelosauria</taxon>
        <taxon>Archosauria</taxon>
        <taxon>Dinosauria</taxon>
        <taxon>Saurischia</taxon>
        <taxon>Theropoda</taxon>
        <taxon>Coelurosauria</taxon>
        <taxon>Aves</taxon>
        <taxon>Palaeognathae</taxon>
        <taxon>Casuariiformes</taxon>
        <taxon>Casuariidae</taxon>
        <taxon>Casuarius</taxon>
    </lineage>
</organism>
<comment type="subcellular location">
    <subcellularLocation>
        <location>Secreted</location>
    </subcellularLocation>
</comment>
<comment type="domain">
    <text>Avian ovomucoid consists of three homologous, tandem Kazal family inhibitory domains.</text>
</comment>
<protein>
    <recommendedName>
        <fullName>Ovomucoid</fullName>
    </recommendedName>
</protein>
<dbReference type="PIR" id="A61587">
    <property type="entry name" value="A61587"/>
</dbReference>
<dbReference type="SMR" id="P62336"/>
<dbReference type="GO" id="GO:0005576">
    <property type="term" value="C:extracellular region"/>
    <property type="evidence" value="ECO:0007669"/>
    <property type="project" value="UniProtKB-SubCell"/>
</dbReference>
<dbReference type="GO" id="GO:0004867">
    <property type="term" value="F:serine-type endopeptidase inhibitor activity"/>
    <property type="evidence" value="ECO:0007669"/>
    <property type="project" value="UniProtKB-KW"/>
</dbReference>
<dbReference type="CDD" id="cd00104">
    <property type="entry name" value="KAZAL_FS"/>
    <property type="match status" value="1"/>
</dbReference>
<dbReference type="FunFam" id="3.30.60.30:FF:000037">
    <property type="entry name" value="Ovomucoid"/>
    <property type="match status" value="1"/>
</dbReference>
<dbReference type="Gene3D" id="3.30.60.30">
    <property type="match status" value="1"/>
</dbReference>
<dbReference type="InterPro" id="IPR051597">
    <property type="entry name" value="Bifunctional_prot_inhibitor"/>
</dbReference>
<dbReference type="InterPro" id="IPR002350">
    <property type="entry name" value="Kazal_dom"/>
</dbReference>
<dbReference type="InterPro" id="IPR036058">
    <property type="entry name" value="Kazal_dom_sf"/>
</dbReference>
<dbReference type="InterPro" id="IPR001239">
    <property type="entry name" value="Prot_inh_Kazal-m"/>
</dbReference>
<dbReference type="PANTHER" id="PTHR47729:SF1">
    <property type="entry name" value="OVOMUCOID-LIKE-RELATED"/>
    <property type="match status" value="1"/>
</dbReference>
<dbReference type="PANTHER" id="PTHR47729">
    <property type="entry name" value="SERINE PEPTIDASE INHIBITOR, KAZAL TYPE 2, TANDEM DUPLICATE 1-RELATED"/>
    <property type="match status" value="1"/>
</dbReference>
<dbReference type="Pfam" id="PF00050">
    <property type="entry name" value="Kazal_1"/>
    <property type="match status" value="1"/>
</dbReference>
<dbReference type="PRINTS" id="PR00290">
    <property type="entry name" value="KAZALINHBTR"/>
</dbReference>
<dbReference type="SMART" id="SM00280">
    <property type="entry name" value="KAZAL"/>
    <property type="match status" value="1"/>
</dbReference>
<dbReference type="SUPFAM" id="SSF100895">
    <property type="entry name" value="Kazal-type serine protease inhibitors"/>
    <property type="match status" value="1"/>
</dbReference>
<dbReference type="PROSITE" id="PS00282">
    <property type="entry name" value="KAZAL_1"/>
    <property type="match status" value="1"/>
</dbReference>
<dbReference type="PROSITE" id="PS51465">
    <property type="entry name" value="KAZAL_2"/>
    <property type="match status" value="1"/>
</dbReference>
<reference key="1">
    <citation type="journal article" date="1993" name="J. Protein Chem.">
        <title>Amino acid sequences of ovomucoid third domains from 27 additional species of birds.</title>
        <authorList>
            <person name="Apostol I."/>
            <person name="Giletto A."/>
            <person name="Komiyama T."/>
            <person name="Zhang W."/>
            <person name="Laskowski M. Jr."/>
        </authorList>
    </citation>
    <scope>PROTEIN SEQUENCE</scope>
</reference>
<accession>P62336</accession>
<accession>P05559</accession>
<name>IOVO_CASBE</name>
<keyword id="KW-0903">Direct protein sequencing</keyword>
<keyword id="KW-1015">Disulfide bond</keyword>
<keyword id="KW-0325">Glycoprotein</keyword>
<keyword id="KW-0646">Protease inhibitor</keyword>
<keyword id="KW-0677">Repeat</keyword>
<keyword id="KW-0964">Secreted</keyword>
<keyword id="KW-0722">Serine protease inhibitor</keyword>